<dbReference type="EC" id="4.2.1.126" evidence="1"/>
<dbReference type="EMBL" id="CU207366">
    <property type="protein sequence ID" value="CAL68269.1"/>
    <property type="molecule type" value="Genomic_DNA"/>
</dbReference>
<dbReference type="RefSeq" id="WP_011711170.1">
    <property type="nucleotide sequence ID" value="NC_008571.1"/>
</dbReference>
<dbReference type="SMR" id="A0M6M4"/>
<dbReference type="STRING" id="411154.GFO_3327"/>
<dbReference type="KEGG" id="gfo:GFO_3327"/>
<dbReference type="eggNOG" id="COG2103">
    <property type="taxonomic scope" value="Bacteria"/>
</dbReference>
<dbReference type="HOGENOM" id="CLU_049049_1_1_10"/>
<dbReference type="OrthoDB" id="9813395at2"/>
<dbReference type="UniPathway" id="UPA00342"/>
<dbReference type="Proteomes" id="UP000000755">
    <property type="component" value="Chromosome"/>
</dbReference>
<dbReference type="GO" id="GO:0097367">
    <property type="term" value="F:carbohydrate derivative binding"/>
    <property type="evidence" value="ECO:0007669"/>
    <property type="project" value="InterPro"/>
</dbReference>
<dbReference type="GO" id="GO:0016835">
    <property type="term" value="F:carbon-oxygen lyase activity"/>
    <property type="evidence" value="ECO:0007669"/>
    <property type="project" value="UniProtKB-UniRule"/>
</dbReference>
<dbReference type="GO" id="GO:0016803">
    <property type="term" value="F:ether hydrolase activity"/>
    <property type="evidence" value="ECO:0007669"/>
    <property type="project" value="TreeGrafter"/>
</dbReference>
<dbReference type="GO" id="GO:0046348">
    <property type="term" value="P:amino sugar catabolic process"/>
    <property type="evidence" value="ECO:0007669"/>
    <property type="project" value="InterPro"/>
</dbReference>
<dbReference type="GO" id="GO:0097173">
    <property type="term" value="P:N-acetylmuramic acid catabolic process"/>
    <property type="evidence" value="ECO:0007669"/>
    <property type="project" value="UniProtKB-UniPathway"/>
</dbReference>
<dbReference type="GO" id="GO:0009254">
    <property type="term" value="P:peptidoglycan turnover"/>
    <property type="evidence" value="ECO:0007669"/>
    <property type="project" value="TreeGrafter"/>
</dbReference>
<dbReference type="CDD" id="cd05007">
    <property type="entry name" value="SIS_Etherase"/>
    <property type="match status" value="1"/>
</dbReference>
<dbReference type="FunFam" id="3.40.50.10490:FF:000014">
    <property type="entry name" value="N-acetylmuramic acid 6-phosphate etherase"/>
    <property type="match status" value="1"/>
</dbReference>
<dbReference type="Gene3D" id="1.10.8.1080">
    <property type="match status" value="1"/>
</dbReference>
<dbReference type="Gene3D" id="3.40.50.10490">
    <property type="entry name" value="Glucose-6-phosphate isomerase like protein, domain 1"/>
    <property type="match status" value="1"/>
</dbReference>
<dbReference type="HAMAP" id="MF_00068">
    <property type="entry name" value="MurQ"/>
    <property type="match status" value="1"/>
</dbReference>
<dbReference type="InterPro" id="IPR005488">
    <property type="entry name" value="Etherase_MurQ"/>
</dbReference>
<dbReference type="InterPro" id="IPR005486">
    <property type="entry name" value="Glucokinase_regulatory_CS"/>
</dbReference>
<dbReference type="InterPro" id="IPR040190">
    <property type="entry name" value="MURQ/GCKR"/>
</dbReference>
<dbReference type="InterPro" id="IPR001347">
    <property type="entry name" value="SIS_dom"/>
</dbReference>
<dbReference type="InterPro" id="IPR046348">
    <property type="entry name" value="SIS_dom_sf"/>
</dbReference>
<dbReference type="NCBIfam" id="TIGR00274">
    <property type="entry name" value="N-acetylmuramic acid 6-phosphate etherase"/>
    <property type="match status" value="1"/>
</dbReference>
<dbReference type="NCBIfam" id="NF003915">
    <property type="entry name" value="PRK05441.1"/>
    <property type="match status" value="1"/>
</dbReference>
<dbReference type="NCBIfam" id="NF009222">
    <property type="entry name" value="PRK12570.1"/>
    <property type="match status" value="1"/>
</dbReference>
<dbReference type="PANTHER" id="PTHR10088">
    <property type="entry name" value="GLUCOKINASE REGULATORY PROTEIN"/>
    <property type="match status" value="1"/>
</dbReference>
<dbReference type="PANTHER" id="PTHR10088:SF4">
    <property type="entry name" value="GLUCOKINASE REGULATORY PROTEIN"/>
    <property type="match status" value="1"/>
</dbReference>
<dbReference type="Pfam" id="PF22645">
    <property type="entry name" value="GKRP_SIS_N"/>
    <property type="match status" value="1"/>
</dbReference>
<dbReference type="SUPFAM" id="SSF53697">
    <property type="entry name" value="SIS domain"/>
    <property type="match status" value="1"/>
</dbReference>
<dbReference type="PROSITE" id="PS01272">
    <property type="entry name" value="GCKR"/>
    <property type="match status" value="1"/>
</dbReference>
<dbReference type="PROSITE" id="PS51464">
    <property type="entry name" value="SIS"/>
    <property type="match status" value="1"/>
</dbReference>
<evidence type="ECO:0000255" key="1">
    <source>
        <dbReference type="HAMAP-Rule" id="MF_00068"/>
    </source>
</evidence>
<keyword id="KW-0119">Carbohydrate metabolism</keyword>
<keyword id="KW-0456">Lyase</keyword>
<proteinExistence type="inferred from homology"/>
<comment type="function">
    <text evidence="1">Specifically catalyzes the cleavage of the D-lactyl ether substituent of MurNAc 6-phosphate, producing GlcNAc 6-phosphate and D-lactate.</text>
</comment>
<comment type="catalytic activity">
    <reaction evidence="1">
        <text>N-acetyl-D-muramate 6-phosphate + H2O = N-acetyl-D-glucosamine 6-phosphate + (R)-lactate</text>
        <dbReference type="Rhea" id="RHEA:26410"/>
        <dbReference type="ChEBI" id="CHEBI:15377"/>
        <dbReference type="ChEBI" id="CHEBI:16004"/>
        <dbReference type="ChEBI" id="CHEBI:57513"/>
        <dbReference type="ChEBI" id="CHEBI:58722"/>
        <dbReference type="EC" id="4.2.1.126"/>
    </reaction>
</comment>
<comment type="pathway">
    <text evidence="1">Amino-sugar metabolism; N-acetylmuramate degradation.</text>
</comment>
<comment type="subunit">
    <text evidence="1">Homodimer.</text>
</comment>
<comment type="miscellaneous">
    <text evidence="1">A lyase-type mechanism (elimination/hydration) is suggested for the cleavage of the lactyl ether bond of MurNAc 6-phosphate, with the formation of an alpha,beta-unsaturated aldehyde intermediate with (E)-stereochemistry, followed by the syn addition of water to give product.</text>
</comment>
<comment type="similarity">
    <text evidence="1">Belongs to the GCKR-like family. MurNAc-6-P etherase subfamily.</text>
</comment>
<organism>
    <name type="scientific">Christiangramia forsetii (strain DSM 17595 / CGMCC 1.15422 / KT0803)</name>
    <name type="common">Gramella forsetii</name>
    <dbReference type="NCBI Taxonomy" id="411154"/>
    <lineage>
        <taxon>Bacteria</taxon>
        <taxon>Pseudomonadati</taxon>
        <taxon>Bacteroidota</taxon>
        <taxon>Flavobacteriia</taxon>
        <taxon>Flavobacteriales</taxon>
        <taxon>Flavobacteriaceae</taxon>
        <taxon>Christiangramia</taxon>
    </lineage>
</organism>
<accession>A0M6M4</accession>
<sequence length="274" mass="29783">MNKKSPDTEKVSNYDYLEKMNTFELLSNINKEDHTIAENVKKQIPSIEKLVDEIIPRIDSGGRLFYIGAGTSGRLGVLDASECPPTFGVSPGIVIGLIAGGDTALRNAVENAEDDTNQAWKDLQEYDISEKDVLVGIAASGTTPYVIGGIKDARNNGIITGCITCSSGSPLAEASEYPIEVVTGPEFVTGSTRMKAGTAQKLVLNMISTSVMIKLGRVKGNKMVDMQLSNDKLVGRGIRMIMEDLNIEKEQAEKLLLEHKSVRKVLDAHKNERN</sequence>
<gene>
    <name evidence="1" type="primary">murQ</name>
    <name type="ordered locus">GFO_3327</name>
</gene>
<reference key="1">
    <citation type="journal article" date="2006" name="Environ. Microbiol.">
        <title>Whole genome analysis of the marine Bacteroidetes'Gramella forsetii' reveals adaptations to degradation of polymeric organic matter.</title>
        <authorList>
            <person name="Bauer M."/>
            <person name="Kube M."/>
            <person name="Teeling H."/>
            <person name="Richter M."/>
            <person name="Lombardot T."/>
            <person name="Allers E."/>
            <person name="Wuerdemann C.A."/>
            <person name="Quast C."/>
            <person name="Kuhl H."/>
            <person name="Knaust F."/>
            <person name="Woebken D."/>
            <person name="Bischof K."/>
            <person name="Mussmann M."/>
            <person name="Choudhuri J.V."/>
            <person name="Meyer F."/>
            <person name="Reinhardt R."/>
            <person name="Amann R.I."/>
            <person name="Gloeckner F.O."/>
        </authorList>
    </citation>
    <scope>NUCLEOTIDE SEQUENCE [LARGE SCALE GENOMIC DNA]</scope>
    <source>
        <strain>DSM 17595 / CGMCC 1.15422 / KT0803</strain>
    </source>
</reference>
<protein>
    <recommendedName>
        <fullName evidence="1">N-acetylmuramic acid 6-phosphate etherase</fullName>
        <shortName evidence="1">MurNAc-6-P etherase</shortName>
        <ecNumber evidence="1">4.2.1.126</ecNumber>
    </recommendedName>
    <alternativeName>
        <fullName evidence="1">N-acetylmuramic acid 6-phosphate hydrolase</fullName>
    </alternativeName>
    <alternativeName>
        <fullName evidence="1">N-acetylmuramic acid 6-phosphate lyase</fullName>
    </alternativeName>
</protein>
<name>MURQ_CHRFK</name>
<feature type="chain" id="PRO_1000075108" description="N-acetylmuramic acid 6-phosphate etherase">
    <location>
        <begin position="1"/>
        <end position="274"/>
    </location>
</feature>
<feature type="domain" description="SIS" evidence="1">
    <location>
        <begin position="54"/>
        <end position="217"/>
    </location>
</feature>
<feature type="active site" description="Proton donor" evidence="1">
    <location>
        <position position="82"/>
    </location>
</feature>
<feature type="active site" evidence="1">
    <location>
        <position position="113"/>
    </location>
</feature>